<protein>
    <recommendedName>
        <fullName>Cilia- and flagella-associated protein 161</fullName>
    </recommendedName>
</protein>
<feature type="chain" id="PRO_0000456164" description="Cilia- and flagella-associated protein 161">
    <location>
        <begin position="1"/>
        <end position="321"/>
    </location>
</feature>
<feature type="region of interest" description="Disordered" evidence="1">
    <location>
        <begin position="275"/>
        <end position="321"/>
    </location>
</feature>
<feature type="compositionally biased region" description="Basic and acidic residues" evidence="1">
    <location>
        <begin position="285"/>
        <end position="299"/>
    </location>
</feature>
<organism evidence="4">
    <name type="scientific">Bos taurus</name>
    <name type="common">Bovine</name>
    <dbReference type="NCBI Taxonomy" id="9913"/>
    <lineage>
        <taxon>Eukaryota</taxon>
        <taxon>Metazoa</taxon>
        <taxon>Chordata</taxon>
        <taxon>Craniata</taxon>
        <taxon>Vertebrata</taxon>
        <taxon>Euteleostomi</taxon>
        <taxon>Mammalia</taxon>
        <taxon>Eutheria</taxon>
        <taxon>Laurasiatheria</taxon>
        <taxon>Artiodactyla</taxon>
        <taxon>Ruminantia</taxon>
        <taxon>Pecora</taxon>
        <taxon>Bovidae</taxon>
        <taxon>Bovinae</taxon>
        <taxon>Bos</taxon>
    </lineage>
</organism>
<proteinExistence type="evidence at protein level"/>
<gene>
    <name evidence="5" type="primary">CFAP161</name>
</gene>
<reference key="1">
    <citation type="journal article" date="2009" name="Genome Biol.">
        <title>A whole-genome assembly of the domestic cow, Bos taurus.</title>
        <authorList>
            <person name="Zimin A.V."/>
            <person name="Delcher A.L."/>
            <person name="Florea L."/>
            <person name="Kelley D.R."/>
            <person name="Schatz M.C."/>
            <person name="Puiu D."/>
            <person name="Hanrahan F."/>
            <person name="Pertea G."/>
            <person name="Van Tassell C.P."/>
            <person name="Sonstegard T.S."/>
            <person name="Marcais G."/>
            <person name="Roberts M."/>
            <person name="Subramanian P."/>
            <person name="Yorke J.A."/>
            <person name="Salzberg S.L."/>
        </authorList>
    </citation>
    <scope>NUCLEOTIDE SEQUENCE [LARGE SCALE GENOMIC DNA]</scope>
    <source>
        <strain>Hereford</strain>
    </source>
</reference>
<reference evidence="6" key="2">
    <citation type="journal article" date="2021" name="Cell">
        <title>De novo identification of mammalian ciliary motility proteins using cryo-EM.</title>
        <authorList>
            <person name="Gui M."/>
            <person name="Farley H."/>
            <person name="Anujan P."/>
            <person name="Anderson J.R."/>
            <person name="Maxwell D.W."/>
            <person name="Whitchurch J.B."/>
            <person name="Botsch J.J."/>
            <person name="Qiu T."/>
            <person name="Meleppattu S."/>
            <person name="Singh S.K."/>
            <person name="Zhang Q."/>
            <person name="Thompson J."/>
            <person name="Lucas J.S."/>
            <person name="Bingle C.D."/>
            <person name="Norris D.P."/>
            <person name="Roy S."/>
            <person name="Brown A."/>
        </authorList>
    </citation>
    <scope>STRUCTURE BY ELECTRON MICROSCOPY (3.40 ANGSTROMS)</scope>
    <scope>FUNCTION</scope>
</reference>
<reference evidence="7" key="3">
    <citation type="journal article" date="2023" name="Cell">
        <title>Structural specializations of the sperm tail.</title>
        <authorList>
            <person name="Leung M.R."/>
            <person name="Zeng J."/>
            <person name="Wang X."/>
            <person name="Roelofs M.C."/>
            <person name="Huang W."/>
            <person name="Zenezini Chiozzi R."/>
            <person name="Hevler J.F."/>
            <person name="Heck A.J.R."/>
            <person name="Dutcher S.K."/>
            <person name="Brown A."/>
            <person name="Zhang R."/>
            <person name="Zeev-Ben-Mordehai T."/>
        </authorList>
    </citation>
    <scope>STRUCTURE BY ELECTRON MICROSCOPY (3.60 ANGSTROMS)</scope>
    <scope>FUNCTION</scope>
    <scope>SUBUNIT</scope>
    <scope>SUBCELLULAR LOCATION</scope>
</reference>
<dbReference type="RefSeq" id="XP_005221930.1">
    <property type="nucleotide sequence ID" value="XM_005221873.5"/>
</dbReference>
<dbReference type="PDB" id="7RRO">
    <property type="method" value="EM"/>
    <property type="resolution" value="3.40 A"/>
    <property type="chains" value="E/F=1-321"/>
</dbReference>
<dbReference type="PDB" id="8OTZ">
    <property type="method" value="EM"/>
    <property type="resolution" value="3.60 A"/>
    <property type="chains" value="i/j=1-321"/>
</dbReference>
<dbReference type="PDB" id="9CPB">
    <property type="method" value="EM"/>
    <property type="resolution" value="3.52 A"/>
    <property type="chains" value="1T/1U=1-321"/>
</dbReference>
<dbReference type="PDBsum" id="7RRO"/>
<dbReference type="PDBsum" id="8OTZ"/>
<dbReference type="PDBsum" id="9CPB"/>
<dbReference type="EMDB" id="EMD-17187"/>
<dbReference type="EMDB" id="EMD-24664"/>
<dbReference type="EMDB" id="EMD-45801"/>
<dbReference type="EMDB" id="EMD-50664"/>
<dbReference type="SMR" id="F6RJC2"/>
<dbReference type="FunCoup" id="F6RJC2">
    <property type="interactions" value="149"/>
</dbReference>
<dbReference type="STRING" id="9913.ENSBTAP00000015744"/>
<dbReference type="Ensembl" id="ENSBTAT00000015744.5">
    <property type="protein sequence ID" value="ENSBTAP00000015744.4"/>
    <property type="gene ID" value="ENSBTAG00000011861.6"/>
</dbReference>
<dbReference type="GeneID" id="511761"/>
<dbReference type="CTD" id="161502"/>
<dbReference type="VEuPathDB" id="HostDB:ENSBTAG00000011861"/>
<dbReference type="VGNC" id="VGNC:27239">
    <property type="gene designation" value="CFAP161"/>
</dbReference>
<dbReference type="GeneTree" id="ENSGT00390000018488"/>
<dbReference type="InParanoid" id="F6RJC2"/>
<dbReference type="OMA" id="IIHCKTN"/>
<dbReference type="OrthoDB" id="2126411at2759"/>
<dbReference type="Proteomes" id="UP000009136">
    <property type="component" value="Chromosome 21"/>
</dbReference>
<dbReference type="Bgee" id="ENSBTAG00000011861">
    <property type="expression patterns" value="Expressed in oviduct epithelium and 93 other cell types or tissues"/>
</dbReference>
<dbReference type="GO" id="GO:0160111">
    <property type="term" value="C:axonemal A tubule inner sheath"/>
    <property type="evidence" value="ECO:0000250"/>
    <property type="project" value="UniProtKB"/>
</dbReference>
<dbReference type="GO" id="GO:0005879">
    <property type="term" value="C:axonemal microtubule"/>
    <property type="evidence" value="ECO:0000314"/>
    <property type="project" value="UniProtKB"/>
</dbReference>
<dbReference type="GO" id="GO:0031514">
    <property type="term" value="C:motile cilium"/>
    <property type="evidence" value="ECO:0000318"/>
    <property type="project" value="GO_Central"/>
</dbReference>
<dbReference type="GO" id="GO:0036126">
    <property type="term" value="C:sperm flagellum"/>
    <property type="evidence" value="ECO:0000250"/>
    <property type="project" value="UniProtKB"/>
</dbReference>
<dbReference type="GO" id="GO:0060271">
    <property type="term" value="P:cilium assembly"/>
    <property type="evidence" value="ECO:0000318"/>
    <property type="project" value="GO_Central"/>
</dbReference>
<dbReference type="GO" id="GO:0030317">
    <property type="term" value="P:flagellated sperm motility"/>
    <property type="evidence" value="ECO:0000250"/>
    <property type="project" value="UniProtKB"/>
</dbReference>
<dbReference type="InterPro" id="IPR055325">
    <property type="entry name" value="CF161"/>
</dbReference>
<dbReference type="PANTHER" id="PTHR24274">
    <property type="entry name" value="CILIA- AND FLAGELLA-ASSOCIATED PROTEIN 161"/>
    <property type="match status" value="1"/>
</dbReference>
<dbReference type="PANTHER" id="PTHR24274:SF1">
    <property type="entry name" value="CILIA- AND FLAGELLA-ASSOCIATED PROTEIN 161"/>
    <property type="match status" value="1"/>
</dbReference>
<dbReference type="Pfam" id="PF24569">
    <property type="entry name" value="CFAP161"/>
    <property type="match status" value="1"/>
</dbReference>
<sequence length="321" mass="36470">MAQNLYGPRVRIGNWNEDVYLEEEIMKDFLAKRDKGQLLIQRNRRLKENLLRPMQLSVSEDGYIHYGDKVMLVSPDHPETEADLFLPGDLSLCMTPDEIKAHLSNELEVPCGLSAAQTKIPVGRNTFTILCAAGEVIGQVLRYGQNFRLGITGGFDDRMLYLSSDHRTLLKSSKRSWLQEVFLTHEDSYLNCWQAAFPHPQLRLEYEGSPVPANTKILITHCHTNRGLVAHRHLFLRTYFGQEAEVAAHTYLDSHRVEKPKNHWMLVTGAPRKDLSTMLDLPKPPAEDTRALEQEREQVSDPGARSTPDARGCVPQCTLPM</sequence>
<name>CF161_BOVIN</name>
<evidence type="ECO:0000256" key="1">
    <source>
        <dbReference type="SAM" id="MobiDB-lite"/>
    </source>
</evidence>
<evidence type="ECO:0000269" key="2">
    <source>
    </source>
</evidence>
<evidence type="ECO:0000269" key="3">
    <source>
    </source>
</evidence>
<evidence type="ECO:0000312" key="4">
    <source>
        <dbReference type="Proteomes" id="UP000009136"/>
    </source>
</evidence>
<evidence type="ECO:0000312" key="5">
    <source>
        <dbReference type="VGNC" id="VGNC:27239"/>
    </source>
</evidence>
<evidence type="ECO:0007744" key="6">
    <source>
        <dbReference type="PDB" id="7RRO"/>
    </source>
</evidence>
<evidence type="ECO:0007744" key="7">
    <source>
        <dbReference type="PDB" id="8OTZ"/>
    </source>
</evidence>
<comment type="function">
    <text evidence="2 3">Microtubule inner protein (MIP) part of the dynein-decorated doublet microtubules (DMTs) in cilia axoneme, which is required for motile cilia beating.</text>
</comment>
<comment type="subunit">
    <text evidence="3">Microtubule inner protein component of sperm flagellar doublet microtubules.</text>
</comment>
<comment type="subcellular location">
    <subcellularLocation>
        <location evidence="2">Cytoplasm</location>
        <location evidence="2">Cytoskeleton</location>
        <location evidence="2">Cilium axoneme</location>
    </subcellularLocation>
    <subcellularLocation>
        <location evidence="3">Cytoplasm</location>
        <location evidence="3">Cytoskeleton</location>
        <location evidence="3">Flagellum axoneme</location>
    </subcellularLocation>
</comment>
<comment type="tissue specificity">
    <text evidence="2">Expressed in trachea multiciliated cells.</text>
</comment>
<keyword id="KW-0002">3D-structure</keyword>
<keyword id="KW-0966">Cell projection</keyword>
<keyword id="KW-0969">Cilium</keyword>
<keyword id="KW-0963">Cytoplasm</keyword>
<keyword id="KW-0206">Cytoskeleton</keyword>
<keyword id="KW-0282">Flagellum</keyword>
<keyword id="KW-1185">Reference proteome</keyword>
<accession>F6RJC2</accession>